<protein>
    <recommendedName>
        <fullName evidence="1">Glucose-6-phosphate 1-dehydrogenase</fullName>
        <shortName evidence="1">G6PD</shortName>
        <ecNumber evidence="1">1.1.1.49</ecNumber>
    </recommendedName>
</protein>
<evidence type="ECO:0000255" key="1">
    <source>
        <dbReference type="HAMAP-Rule" id="MF_00966"/>
    </source>
</evidence>
<gene>
    <name evidence="1" type="primary">zwf</name>
    <name type="ordered locus">TC_0457</name>
</gene>
<sequence>MEEIKEMGPTLPACPPCVMVIFGATGDLTARKLFPALYNLTKEGRLSENFVCVGFARRPKSHEQFREEMRQAIQNFSHSSEIDIRVWESLEHRIFYHQANFSEAEGYSSLRSFLESVDQKYGTKGNRLFYLSTPPDYFQEIIRNLNRHQLFYHEQGAQQPWSRLIIEKPFGVDLQTAQELQQCIDANINEESVYRIDHYLGKETVQNILTIRFANTLFESCWNSQYIDHVQISVSESIGIGSRGNFFEKSGMLRDMVQNHLMQLLCLLTMEPPSEFSSAEIKKEKIKILKKILPIREEDVIRGQYGEGVVQGVSVSGYREEENVDPNSLVETYVALKLFIDNPRWKGVPFYLQAGKRLPKRTTDIAVIFKKSSYDLFNSENCPLCPLENDLLIIRIQPDEGVALQFNCKVPGTNKLVRPVKMDFRYDSYFNTVTPEAYERLLCDCILGDRTLFTSNEEVLASWELFSPLLEQWSKIRPIFPNYIAGSLRPQGADELLSRDGRAWRSY</sequence>
<comment type="function">
    <text evidence="1">Catalyzes the oxidation of glucose 6-phosphate to 6-phosphogluconolactone.</text>
</comment>
<comment type="catalytic activity">
    <reaction evidence="1">
        <text>D-glucose 6-phosphate + NADP(+) = 6-phospho-D-glucono-1,5-lactone + NADPH + H(+)</text>
        <dbReference type="Rhea" id="RHEA:15841"/>
        <dbReference type="ChEBI" id="CHEBI:15378"/>
        <dbReference type="ChEBI" id="CHEBI:57783"/>
        <dbReference type="ChEBI" id="CHEBI:57955"/>
        <dbReference type="ChEBI" id="CHEBI:58349"/>
        <dbReference type="ChEBI" id="CHEBI:61548"/>
        <dbReference type="EC" id="1.1.1.49"/>
    </reaction>
</comment>
<comment type="pathway">
    <text evidence="1">Carbohydrate degradation; pentose phosphate pathway; D-ribulose 5-phosphate from D-glucose 6-phosphate (oxidative stage): step 1/3.</text>
</comment>
<comment type="similarity">
    <text evidence="1">Belongs to the glucose-6-phosphate dehydrogenase family.</text>
</comment>
<feature type="chain" id="PRO_0000068115" description="Glucose-6-phosphate 1-dehydrogenase">
    <location>
        <begin position="1"/>
        <end position="507"/>
    </location>
</feature>
<feature type="active site" description="Proton acceptor" evidence="1">
    <location>
        <position position="260"/>
    </location>
</feature>
<feature type="binding site" evidence="1">
    <location>
        <position position="57"/>
    </location>
    <ligand>
        <name>NADP(+)</name>
        <dbReference type="ChEBI" id="CHEBI:58349"/>
    </ligand>
</feature>
<feature type="binding site" evidence="1">
    <location>
        <position position="168"/>
    </location>
    <ligand>
        <name>NADP(+)</name>
        <dbReference type="ChEBI" id="CHEBI:58349"/>
    </ligand>
</feature>
<feature type="binding site" evidence="1">
    <location>
        <position position="198"/>
    </location>
    <ligand>
        <name>substrate</name>
    </ligand>
</feature>
<feature type="binding site" evidence="1">
    <location>
        <position position="202"/>
    </location>
    <ligand>
        <name>substrate</name>
    </ligand>
</feature>
<feature type="binding site" evidence="1">
    <location>
        <position position="236"/>
    </location>
    <ligand>
        <name>substrate</name>
    </ligand>
</feature>
<feature type="binding site" evidence="1">
    <location>
        <position position="255"/>
    </location>
    <ligand>
        <name>substrate</name>
    </ligand>
</feature>
<feature type="binding site" evidence="1">
    <location>
        <position position="356"/>
    </location>
    <ligand>
        <name>substrate</name>
    </ligand>
</feature>
<organism>
    <name type="scientific">Chlamydia muridarum (strain MoPn / Nigg)</name>
    <dbReference type="NCBI Taxonomy" id="243161"/>
    <lineage>
        <taxon>Bacteria</taxon>
        <taxon>Pseudomonadati</taxon>
        <taxon>Chlamydiota</taxon>
        <taxon>Chlamydiia</taxon>
        <taxon>Chlamydiales</taxon>
        <taxon>Chlamydiaceae</taxon>
        <taxon>Chlamydia/Chlamydophila group</taxon>
        <taxon>Chlamydia</taxon>
    </lineage>
</organism>
<name>G6PD_CHLMU</name>
<reference key="1">
    <citation type="journal article" date="2000" name="Nucleic Acids Res.">
        <title>Genome sequences of Chlamydia trachomatis MoPn and Chlamydia pneumoniae AR39.</title>
        <authorList>
            <person name="Read T.D."/>
            <person name="Brunham R.C."/>
            <person name="Shen C."/>
            <person name="Gill S.R."/>
            <person name="Heidelberg J.F."/>
            <person name="White O."/>
            <person name="Hickey E.K."/>
            <person name="Peterson J.D."/>
            <person name="Utterback T.R."/>
            <person name="Berry K.J."/>
            <person name="Bass S."/>
            <person name="Linher K.D."/>
            <person name="Weidman J.F."/>
            <person name="Khouri H.M."/>
            <person name="Craven B."/>
            <person name="Bowman C."/>
            <person name="Dodson R.J."/>
            <person name="Gwinn M.L."/>
            <person name="Nelson W.C."/>
            <person name="DeBoy R.T."/>
            <person name="Kolonay J.F."/>
            <person name="McClarty G."/>
            <person name="Salzberg S.L."/>
            <person name="Eisen J.A."/>
            <person name="Fraser C.M."/>
        </authorList>
    </citation>
    <scope>NUCLEOTIDE SEQUENCE [LARGE SCALE GENOMIC DNA]</scope>
    <source>
        <strain>MoPn / Nigg</strain>
    </source>
</reference>
<dbReference type="EC" id="1.1.1.49" evidence="1"/>
<dbReference type="EMBL" id="AE002160">
    <property type="protein sequence ID" value="AAF73556.1"/>
    <property type="molecule type" value="Genomic_DNA"/>
</dbReference>
<dbReference type="SMR" id="Q9PKK8"/>
<dbReference type="KEGG" id="cmu:TC_0457"/>
<dbReference type="eggNOG" id="COG0364">
    <property type="taxonomic scope" value="Bacteria"/>
</dbReference>
<dbReference type="HOGENOM" id="CLU_013524_5_0_0"/>
<dbReference type="OrthoDB" id="9802739at2"/>
<dbReference type="UniPathway" id="UPA00115">
    <property type="reaction ID" value="UER00408"/>
</dbReference>
<dbReference type="Proteomes" id="UP000000800">
    <property type="component" value="Chromosome"/>
</dbReference>
<dbReference type="GO" id="GO:0005829">
    <property type="term" value="C:cytosol"/>
    <property type="evidence" value="ECO:0007669"/>
    <property type="project" value="TreeGrafter"/>
</dbReference>
<dbReference type="GO" id="GO:0004345">
    <property type="term" value="F:glucose-6-phosphate dehydrogenase activity"/>
    <property type="evidence" value="ECO:0007669"/>
    <property type="project" value="UniProtKB-UniRule"/>
</dbReference>
<dbReference type="GO" id="GO:0050661">
    <property type="term" value="F:NADP binding"/>
    <property type="evidence" value="ECO:0007669"/>
    <property type="project" value="UniProtKB-UniRule"/>
</dbReference>
<dbReference type="GO" id="GO:0006006">
    <property type="term" value="P:glucose metabolic process"/>
    <property type="evidence" value="ECO:0007669"/>
    <property type="project" value="UniProtKB-KW"/>
</dbReference>
<dbReference type="GO" id="GO:0009051">
    <property type="term" value="P:pentose-phosphate shunt, oxidative branch"/>
    <property type="evidence" value="ECO:0007669"/>
    <property type="project" value="TreeGrafter"/>
</dbReference>
<dbReference type="Gene3D" id="3.30.360.10">
    <property type="entry name" value="Dihydrodipicolinate Reductase, domain 2"/>
    <property type="match status" value="1"/>
</dbReference>
<dbReference type="Gene3D" id="3.40.50.720">
    <property type="entry name" value="NAD(P)-binding Rossmann-like Domain"/>
    <property type="match status" value="1"/>
</dbReference>
<dbReference type="HAMAP" id="MF_00966">
    <property type="entry name" value="G6PD"/>
    <property type="match status" value="1"/>
</dbReference>
<dbReference type="InterPro" id="IPR001282">
    <property type="entry name" value="G6P_DH"/>
</dbReference>
<dbReference type="InterPro" id="IPR019796">
    <property type="entry name" value="G6P_DH_AS"/>
</dbReference>
<dbReference type="InterPro" id="IPR022675">
    <property type="entry name" value="G6P_DH_C"/>
</dbReference>
<dbReference type="InterPro" id="IPR022674">
    <property type="entry name" value="G6P_DH_NAD-bd"/>
</dbReference>
<dbReference type="InterPro" id="IPR036291">
    <property type="entry name" value="NAD(P)-bd_dom_sf"/>
</dbReference>
<dbReference type="NCBIfam" id="TIGR00871">
    <property type="entry name" value="zwf"/>
    <property type="match status" value="1"/>
</dbReference>
<dbReference type="PANTHER" id="PTHR23429:SF0">
    <property type="entry name" value="GLUCOSE-6-PHOSPHATE 1-DEHYDROGENASE"/>
    <property type="match status" value="1"/>
</dbReference>
<dbReference type="PANTHER" id="PTHR23429">
    <property type="entry name" value="GLUCOSE-6-PHOSPHATE 1-DEHYDROGENASE G6PD"/>
    <property type="match status" value="1"/>
</dbReference>
<dbReference type="Pfam" id="PF02781">
    <property type="entry name" value="G6PD_C"/>
    <property type="match status" value="1"/>
</dbReference>
<dbReference type="Pfam" id="PF00479">
    <property type="entry name" value="G6PD_N"/>
    <property type="match status" value="1"/>
</dbReference>
<dbReference type="PIRSF" id="PIRSF000110">
    <property type="entry name" value="G6PD"/>
    <property type="match status" value="1"/>
</dbReference>
<dbReference type="PRINTS" id="PR00079">
    <property type="entry name" value="G6PDHDRGNASE"/>
</dbReference>
<dbReference type="SUPFAM" id="SSF55347">
    <property type="entry name" value="Glyceraldehyde-3-phosphate dehydrogenase-like, C-terminal domain"/>
    <property type="match status" value="1"/>
</dbReference>
<dbReference type="SUPFAM" id="SSF51735">
    <property type="entry name" value="NAD(P)-binding Rossmann-fold domains"/>
    <property type="match status" value="1"/>
</dbReference>
<dbReference type="PROSITE" id="PS00069">
    <property type="entry name" value="G6P_DEHYDROGENASE"/>
    <property type="match status" value="1"/>
</dbReference>
<accession>Q9PKK8</accession>
<keyword id="KW-0119">Carbohydrate metabolism</keyword>
<keyword id="KW-0313">Glucose metabolism</keyword>
<keyword id="KW-0521">NADP</keyword>
<keyword id="KW-0560">Oxidoreductase</keyword>
<proteinExistence type="inferred from homology"/>